<protein>
    <recommendedName>
        <fullName>Putative defensin-like protein 64</fullName>
    </recommendedName>
</protein>
<sequence length="90" mass="10904">MWGRQIVLKIFFLVLSCVIVIETERIDICFIPCTRRYGDYECWFDCTYNRYKEGGCVEDVVVKHNRNRPTFRAVELCFFSIKFMYDFSMK</sequence>
<gene>
    <name type="ordered locus">At2g03932</name>
    <name type="ORF">F3C11</name>
</gene>
<feature type="signal peptide" evidence="2">
    <location>
        <begin position="1"/>
        <end position="23"/>
    </location>
</feature>
<feature type="chain" id="PRO_0000379643" description="Putative defensin-like protein 64">
    <location>
        <begin position="24"/>
        <end position="90"/>
    </location>
</feature>
<feature type="disulfide bond" evidence="1">
    <location>
        <begin position="33"/>
        <end position="56"/>
    </location>
</feature>
<feature type="disulfide bond" evidence="1">
    <location>
        <begin position="42"/>
        <end position="77"/>
    </location>
</feature>
<proteinExistence type="uncertain"/>
<accession>Q2V4A7</accession>
<organism>
    <name type="scientific">Arabidopsis thaliana</name>
    <name type="common">Mouse-ear cress</name>
    <dbReference type="NCBI Taxonomy" id="3702"/>
    <lineage>
        <taxon>Eukaryota</taxon>
        <taxon>Viridiplantae</taxon>
        <taxon>Streptophyta</taxon>
        <taxon>Embryophyta</taxon>
        <taxon>Tracheophyta</taxon>
        <taxon>Spermatophyta</taxon>
        <taxon>Magnoliopsida</taxon>
        <taxon>eudicotyledons</taxon>
        <taxon>Gunneridae</taxon>
        <taxon>Pentapetalae</taxon>
        <taxon>rosids</taxon>
        <taxon>malvids</taxon>
        <taxon>Brassicales</taxon>
        <taxon>Brassicaceae</taxon>
        <taxon>Camelineae</taxon>
        <taxon>Arabidopsis</taxon>
    </lineage>
</organism>
<keyword id="KW-0929">Antimicrobial</keyword>
<keyword id="KW-1015">Disulfide bond</keyword>
<keyword id="KW-0295">Fungicide</keyword>
<keyword id="KW-0611">Plant defense</keyword>
<keyword id="KW-1185">Reference proteome</keyword>
<keyword id="KW-0964">Secreted</keyword>
<keyword id="KW-0732">Signal</keyword>
<dbReference type="EMBL" id="AC007167">
    <property type="status" value="NOT_ANNOTATED_CDS"/>
    <property type="molecule type" value="Genomic_DNA"/>
</dbReference>
<dbReference type="EMBL" id="CP002685">
    <property type="protein sequence ID" value="AEC05767.1"/>
    <property type="molecule type" value="Genomic_DNA"/>
</dbReference>
<dbReference type="RefSeq" id="NP_001031308.1">
    <property type="nucleotide sequence ID" value="NM_001036231.1"/>
</dbReference>
<dbReference type="PaxDb" id="3702-AT2G03932.1"/>
<dbReference type="EnsemblPlants" id="AT2G03932.1">
    <property type="protein sequence ID" value="AT2G03932.1"/>
    <property type="gene ID" value="AT2G03932"/>
</dbReference>
<dbReference type="GeneID" id="3768141"/>
<dbReference type="Gramene" id="AT2G03932.1">
    <property type="protein sequence ID" value="AT2G03932.1"/>
    <property type="gene ID" value="AT2G03932"/>
</dbReference>
<dbReference type="KEGG" id="ath:AT2G03932"/>
<dbReference type="Araport" id="AT2G03932"/>
<dbReference type="TAIR" id="AT2G03932"/>
<dbReference type="HOGENOM" id="CLU_2443856_0_0_1"/>
<dbReference type="InParanoid" id="Q2V4A7"/>
<dbReference type="Proteomes" id="UP000006548">
    <property type="component" value="Chromosome 2"/>
</dbReference>
<dbReference type="GO" id="GO:0005576">
    <property type="term" value="C:extracellular region"/>
    <property type="evidence" value="ECO:0007669"/>
    <property type="project" value="UniProtKB-SubCell"/>
</dbReference>
<dbReference type="GO" id="GO:0050832">
    <property type="term" value="P:defense response to fungus"/>
    <property type="evidence" value="ECO:0007669"/>
    <property type="project" value="UniProtKB-KW"/>
</dbReference>
<dbReference type="GO" id="GO:0031640">
    <property type="term" value="P:killing of cells of another organism"/>
    <property type="evidence" value="ECO:0007669"/>
    <property type="project" value="UniProtKB-KW"/>
</dbReference>
<dbReference type="InterPro" id="IPR056373">
    <property type="entry name" value="Defensin-like_dom"/>
</dbReference>
<dbReference type="Pfam" id="PF24552">
    <property type="entry name" value="Defensin"/>
    <property type="match status" value="1"/>
</dbReference>
<name>DEF64_ARATH</name>
<comment type="subcellular location">
    <subcellularLocation>
        <location evidence="1">Secreted</location>
    </subcellularLocation>
</comment>
<comment type="similarity">
    <text evidence="3">Belongs to the DEFL family.</text>
</comment>
<comment type="caution">
    <text evidence="3">Could be the product of a pseudogene. Lacks 2 of the 4 disulfide bonds, which are conserved features of the family.</text>
</comment>
<evidence type="ECO:0000250" key="1"/>
<evidence type="ECO:0000255" key="2"/>
<evidence type="ECO:0000305" key="3"/>
<reference key="1">
    <citation type="journal article" date="1999" name="Nature">
        <title>Sequence and analysis of chromosome 2 of the plant Arabidopsis thaliana.</title>
        <authorList>
            <person name="Lin X."/>
            <person name="Kaul S."/>
            <person name="Rounsley S.D."/>
            <person name="Shea T.P."/>
            <person name="Benito M.-I."/>
            <person name="Town C.D."/>
            <person name="Fujii C.Y."/>
            <person name="Mason T.M."/>
            <person name="Bowman C.L."/>
            <person name="Barnstead M.E."/>
            <person name="Feldblyum T.V."/>
            <person name="Buell C.R."/>
            <person name="Ketchum K.A."/>
            <person name="Lee J.J."/>
            <person name="Ronning C.M."/>
            <person name="Koo H.L."/>
            <person name="Moffat K.S."/>
            <person name="Cronin L.A."/>
            <person name="Shen M."/>
            <person name="Pai G."/>
            <person name="Van Aken S."/>
            <person name="Umayam L."/>
            <person name="Tallon L.J."/>
            <person name="Gill J.E."/>
            <person name="Adams M.D."/>
            <person name="Carrera A.J."/>
            <person name="Creasy T.H."/>
            <person name="Goodman H.M."/>
            <person name="Somerville C.R."/>
            <person name="Copenhaver G.P."/>
            <person name="Preuss D."/>
            <person name="Nierman W.C."/>
            <person name="White O."/>
            <person name="Eisen J.A."/>
            <person name="Salzberg S.L."/>
            <person name="Fraser C.M."/>
            <person name="Venter J.C."/>
        </authorList>
    </citation>
    <scope>NUCLEOTIDE SEQUENCE [LARGE SCALE GENOMIC DNA]</scope>
    <source>
        <strain>cv. Columbia</strain>
    </source>
</reference>
<reference key="2">
    <citation type="journal article" date="2017" name="Plant J.">
        <title>Araport11: a complete reannotation of the Arabidopsis thaliana reference genome.</title>
        <authorList>
            <person name="Cheng C.Y."/>
            <person name="Krishnakumar V."/>
            <person name="Chan A.P."/>
            <person name="Thibaud-Nissen F."/>
            <person name="Schobel S."/>
            <person name="Town C.D."/>
        </authorList>
    </citation>
    <scope>GENOME REANNOTATION</scope>
    <source>
        <strain>cv. Columbia</strain>
    </source>
</reference>
<reference key="3">
    <citation type="journal article" date="2005" name="Plant Physiol.">
        <title>Genome organization of more than 300 defensin-like genes in Arabidopsis.</title>
        <authorList>
            <person name="Silverstein K.A.T."/>
            <person name="Graham M.A."/>
            <person name="Paape T.D."/>
            <person name="VandenBosch K.A."/>
        </authorList>
    </citation>
    <scope>GENE FAMILY</scope>
</reference>